<feature type="chain" id="PRO_0000447257" description="TLC domain-containing protein fld-1">
    <location>
        <begin position="1"/>
        <end position="350"/>
    </location>
</feature>
<feature type="transmembrane region" description="Helical" evidence="1">
    <location>
        <begin position="9"/>
        <end position="29"/>
    </location>
</feature>
<feature type="transmembrane region" description="Helical" evidence="1">
    <location>
        <begin position="111"/>
        <end position="131"/>
    </location>
</feature>
<feature type="transmembrane region" description="Helical" evidence="1">
    <location>
        <begin position="145"/>
        <end position="165"/>
    </location>
</feature>
<feature type="transmembrane region" description="Helical" evidence="1">
    <location>
        <begin position="173"/>
        <end position="193"/>
    </location>
</feature>
<feature type="transmembrane region" description="Helical" evidence="1">
    <location>
        <begin position="195"/>
        <end position="215"/>
    </location>
</feature>
<feature type="transmembrane region" description="Helical" evidence="1">
    <location>
        <begin position="229"/>
        <end position="249"/>
    </location>
</feature>
<feature type="transmembrane region" description="Helical" evidence="1">
    <location>
        <begin position="270"/>
        <end position="292"/>
    </location>
</feature>
<feature type="domain" description="TLC" evidence="2">
    <location>
        <begin position="102"/>
        <end position="279"/>
    </location>
</feature>
<feature type="region of interest" description="Disordered" evidence="3">
    <location>
        <begin position="65"/>
        <end position="100"/>
    </location>
</feature>
<feature type="compositionally biased region" description="Acidic residues" evidence="3">
    <location>
        <begin position="75"/>
        <end position="90"/>
    </location>
</feature>
<feature type="mutagenesis site" description="In gk653147; suppresses the saturated fatty acid toxicity phenotypes of paqr-2 (tm3410) mutants (specifically, withered tail tip morphology and glucose intolerance)." evidence="4">
    <location>
        <begin position="46"/>
        <end position="350"/>
    </location>
</feature>
<feature type="mutagenesis site" description="In et50; suppresses the glucose intolerance defects of paqr-2 (tm3410) and mdt-15 (et14) double mutants." evidence="4">
    <original>H</original>
    <variation>Y</variation>
    <location>
        <position position="116"/>
    </location>
</feature>
<feature type="mutagenesis site" description="In et45; suppresses the saturated fatty acid toxicity phenotypes of paqr-2 (tm3410) mutants (specifically, withered tail tip morphology and glucose intolerance)." evidence="4">
    <original>D</original>
    <variation>N</variation>
    <location>
        <position position="160"/>
    </location>
</feature>
<feature type="mutagenesis site" description="In et47; suppresses the saturated fatty acid toxicity phenotypes of paqr-2 (tm3410) mutants (specifically, withered tail tip morphology and glucose intolerance)." evidence="4">
    <original>E</original>
    <variation>K</variation>
    <location>
        <position position="207"/>
    </location>
</feature>
<feature type="mutagenesis site" description="In et51; suppresses the glucose intolerance defects of paqr-2 (tm3410) mutants." evidence="4">
    <original>H</original>
    <variation>P</variation>
    <location>
        <position position="214"/>
    </location>
</feature>
<feature type="mutagenesis site" description="In et49; suppresses the saturated fatty acid toxicity phenotypes of paqr-2 (tm3410) mutants (specifically, withered tail tip morphology and glucose intolerance)." evidence="4">
    <original>L</original>
    <variation>F</variation>
    <location>
        <position position="290"/>
    </location>
</feature>
<gene>
    <name evidence="5 8" type="primary">fld-1</name>
    <name evidence="8" type="ORF">Y63D3A.8</name>
</gene>
<dbReference type="EMBL" id="BX284601">
    <property type="protein sequence ID" value="CAA21712.2"/>
    <property type="molecule type" value="Genomic_DNA"/>
</dbReference>
<dbReference type="PIR" id="T23273">
    <property type="entry name" value="T23273"/>
</dbReference>
<dbReference type="RefSeq" id="NP_493466.2">
    <property type="nucleotide sequence ID" value="NM_061065.8"/>
</dbReference>
<dbReference type="SMR" id="G5EF48"/>
<dbReference type="FunCoup" id="G5EF48">
    <property type="interactions" value="221"/>
</dbReference>
<dbReference type="STRING" id="6239.Y63D3A.8.1"/>
<dbReference type="PaxDb" id="6239-Y63D3A.8"/>
<dbReference type="PeptideAtlas" id="G5EF48"/>
<dbReference type="EnsemblMetazoa" id="Y63D3A.8.1">
    <property type="protein sequence ID" value="Y63D3A.8.1"/>
    <property type="gene ID" value="WBGene00013407"/>
</dbReference>
<dbReference type="GeneID" id="173280"/>
<dbReference type="KEGG" id="cel:CELE_Y63D3A.8"/>
<dbReference type="AGR" id="WB:WBGene00013407"/>
<dbReference type="CTD" id="173280"/>
<dbReference type="WormBase" id="Y63D3A.8">
    <property type="protein sequence ID" value="CE39301"/>
    <property type="gene ID" value="WBGene00013407"/>
    <property type="gene designation" value="fld-1"/>
</dbReference>
<dbReference type="eggNOG" id="KOG4474">
    <property type="taxonomic scope" value="Eukaryota"/>
</dbReference>
<dbReference type="GeneTree" id="ENSGT01010000222313"/>
<dbReference type="HOGENOM" id="CLU_056440_0_0_1"/>
<dbReference type="InParanoid" id="G5EF48"/>
<dbReference type="OMA" id="WMSLWLL"/>
<dbReference type="OrthoDB" id="10266980at2759"/>
<dbReference type="PhylomeDB" id="G5EF48"/>
<dbReference type="PRO" id="PR:G5EF48"/>
<dbReference type="Proteomes" id="UP000001940">
    <property type="component" value="Chromosome I"/>
</dbReference>
<dbReference type="Bgee" id="WBGene00013407">
    <property type="expression patterns" value="Expressed in embryo and 4 other cell types or tissues"/>
</dbReference>
<dbReference type="GO" id="GO:0005886">
    <property type="term" value="C:plasma membrane"/>
    <property type="evidence" value="ECO:0000314"/>
    <property type="project" value="UniProtKB"/>
</dbReference>
<dbReference type="GO" id="GO:0071709">
    <property type="term" value="P:membrane assembly"/>
    <property type="evidence" value="ECO:0000315"/>
    <property type="project" value="UniProtKB"/>
</dbReference>
<dbReference type="GO" id="GO:0055091">
    <property type="term" value="P:phospholipid homeostasis"/>
    <property type="evidence" value="ECO:0000315"/>
    <property type="project" value="UniProtKB"/>
</dbReference>
<dbReference type="GO" id="GO:0007009">
    <property type="term" value="P:plasma membrane organization"/>
    <property type="evidence" value="ECO:0000315"/>
    <property type="project" value="UniProtKB"/>
</dbReference>
<dbReference type="GO" id="GO:0097035">
    <property type="term" value="P:regulation of membrane lipid distribution"/>
    <property type="evidence" value="ECO:0000315"/>
    <property type="project" value="UniProtKB"/>
</dbReference>
<dbReference type="InterPro" id="IPR006634">
    <property type="entry name" value="TLC-dom"/>
</dbReference>
<dbReference type="InterPro" id="IPR050846">
    <property type="entry name" value="TLCD"/>
</dbReference>
<dbReference type="PANTHER" id="PTHR13439">
    <property type="entry name" value="CT120 PROTEIN"/>
    <property type="match status" value="1"/>
</dbReference>
<dbReference type="PANTHER" id="PTHR13439:SF70">
    <property type="entry name" value="TLC DOMAIN-CONTAINING PROTEIN-RELATED"/>
    <property type="match status" value="1"/>
</dbReference>
<dbReference type="Pfam" id="PF03798">
    <property type="entry name" value="TRAM_LAG1_CLN8"/>
    <property type="match status" value="1"/>
</dbReference>
<dbReference type="SMART" id="SM00724">
    <property type="entry name" value="TLC"/>
    <property type="match status" value="1"/>
</dbReference>
<dbReference type="PROSITE" id="PS50922">
    <property type="entry name" value="TLC"/>
    <property type="match status" value="1"/>
</dbReference>
<protein>
    <recommendedName>
        <fullName evidence="6">TLC domain-containing protein fld-1</fullName>
    </recommendedName>
    <alternativeName>
        <fullName evidence="5">Membrane fluidity homeostasis protein 1</fullName>
    </alternativeName>
</protein>
<comment type="function">
    <text evidence="4">Regulates the composition and fluidity of the plasma membrane (PubMed:30509349). Inhibits the incorporation of membrane-fluidizing phospholipids containing omega-3 long-chain polyunsaturated fatty acids (LCPUFA) and thereby promotes membrane rigidity (PubMed:30509349). Does not appear to have any effect on LCPUFA synthesis (PubMed:30509349).</text>
</comment>
<comment type="subcellular location">
    <subcellularLocation>
        <location evidence="4">Cell membrane</location>
        <topology evidence="1">Multi-pass membrane protein</topology>
    </subcellularLocation>
</comment>
<comment type="tissue specificity">
    <text evidence="4">Ubiquitously expressed.</text>
</comment>
<comment type="developmental stage">
    <text evidence="4">Expressed throughout development.</text>
</comment>
<name>FLD1_CAEEL</name>
<accession>G5EF48</accession>
<reference evidence="7" key="1">
    <citation type="journal article" date="1998" name="Science">
        <title>Genome sequence of the nematode C. elegans: a platform for investigating biology.</title>
        <authorList>
            <consortium name="The C. elegans sequencing consortium"/>
        </authorList>
    </citation>
    <scope>NUCLEOTIDE SEQUENCE [LARGE SCALE GENOMIC DNA]</scope>
    <source>
        <strain evidence="7">Bristol N2</strain>
    </source>
</reference>
<reference evidence="6" key="2">
    <citation type="journal article" date="2018" name="Elife">
        <title>Membrane fluidity is regulated by the C. elegans transmembrane protein FLD-1 and its human homologs TLCD1/2.</title>
        <authorList>
            <person name="Ruiz M."/>
            <person name="Bodhicharla R."/>
            <person name="Svensk E."/>
            <person name="Devkota R."/>
            <person name="Busayavalasa K."/>
            <person name="Palmgren H."/>
            <person name="Staahlman M."/>
            <person name="Boren J."/>
            <person name="Pilon M."/>
        </authorList>
    </citation>
    <scope>FUNCTION</scope>
    <scope>SUBCELLULAR LOCATION</scope>
    <scope>TISSUE SPECIFICITY</scope>
    <scope>DEVELOPMENTAL STAGE</scope>
    <scope>MUTAGENESIS OF 46-TRP--VAL-350; HIS-116; ASP-160; GLU-207; HIS-214 AND LEU-290</scope>
</reference>
<organism evidence="7">
    <name type="scientific">Caenorhabditis elegans</name>
    <dbReference type="NCBI Taxonomy" id="6239"/>
    <lineage>
        <taxon>Eukaryota</taxon>
        <taxon>Metazoa</taxon>
        <taxon>Ecdysozoa</taxon>
        <taxon>Nematoda</taxon>
        <taxon>Chromadorea</taxon>
        <taxon>Rhabditida</taxon>
        <taxon>Rhabditina</taxon>
        <taxon>Rhabditomorpha</taxon>
        <taxon>Rhabditoidea</taxon>
        <taxon>Rhabditidae</taxon>
        <taxon>Peloderinae</taxon>
        <taxon>Caenorhabditis</taxon>
    </lineage>
</organism>
<keyword id="KW-1003">Cell membrane</keyword>
<keyword id="KW-0472">Membrane</keyword>
<keyword id="KW-1185">Reference proteome</keyword>
<keyword id="KW-0812">Transmembrane</keyword>
<keyword id="KW-1133">Transmembrane helix</keyword>
<sequence>MRQLAELLTDLLGPVPTMFLWVIVSFAFFRALQFIVRWYLFGKWTWPNFNFFDIRNRIRRRRRGGQEAENTENPPENEAEAGEQVEQEPEPDSRDLSAIPPNKKWRISNECVSLFHSVISGLWAAYALLYYKQLVQDLVNYRCDVAINLVLMSAGYLFHDLVDLLVNEQSARIIELLFHHVVVLSAFAVTMFFNRFLGVVVFGLLMELNSIFLHSRSLLNLYGVDKKSPSFRIIALLNMVTLFAFRLCVSAYLVYFVVVSIPDLEWYVSIINGLVIASLASTNTVLTYRLLAADGLLGSRRTRRTPAATAETQVGDVESGPLRTQVEDEDHHTIGVQTIHGTTEDATQTV</sequence>
<proteinExistence type="evidence at protein level"/>
<evidence type="ECO:0000255" key="1"/>
<evidence type="ECO:0000255" key="2">
    <source>
        <dbReference type="PROSITE-ProRule" id="PRU00205"/>
    </source>
</evidence>
<evidence type="ECO:0000256" key="3">
    <source>
        <dbReference type="SAM" id="MobiDB-lite"/>
    </source>
</evidence>
<evidence type="ECO:0000269" key="4">
    <source>
    </source>
</evidence>
<evidence type="ECO:0000303" key="5">
    <source>
    </source>
</evidence>
<evidence type="ECO:0000305" key="6"/>
<evidence type="ECO:0000312" key="7">
    <source>
        <dbReference type="Proteomes" id="UP000001940"/>
    </source>
</evidence>
<evidence type="ECO:0000312" key="8">
    <source>
        <dbReference type="WormBase" id="Y63D3A.8"/>
    </source>
</evidence>